<keyword id="KW-0186">Copper</keyword>
<keyword id="KW-0249">Electron transport</keyword>
<keyword id="KW-0460">Magnesium</keyword>
<keyword id="KW-0472">Membrane</keyword>
<keyword id="KW-0479">Metal-binding</keyword>
<keyword id="KW-0496">Mitochondrion</keyword>
<keyword id="KW-0999">Mitochondrion inner membrane</keyword>
<keyword id="KW-0597">Phosphoprotein</keyword>
<keyword id="KW-0679">Respiratory chain</keyword>
<keyword id="KW-1278">Translocase</keyword>
<keyword id="KW-0812">Transmembrane</keyword>
<keyword id="KW-1133">Transmembrane helix</keyword>
<keyword id="KW-0813">Transport</keyword>
<comment type="function">
    <text evidence="3">Component of the cytochrome c oxidase, the last enzyme in the mitochondrial electron transport chain which drives oxidative phosphorylation. The respiratory chain contains 3 multisubunit complexes succinate dehydrogenase (complex II, CII), ubiquinol-cytochrome c oxidoreductase (cytochrome b-c1 complex, complex III, CIII) and cytochrome c oxidase (complex IV, CIV), that cooperate to transfer electrons derived from NADH and succinate to molecular oxygen, creating an electrochemical gradient over the inner membrane that drives transmembrane transport and the ATP synthase. Cytochrome c oxidase is the component of the respiratory chain that catalyzes the reduction of oxygen to water. Electrons originating from reduced cytochrome c in the intermembrane space (IMS) are transferred via the dinuclear copper A center (CU(A)) of subunit 2 and heme A of subunit 1 to the active site in subunit 1, a binuclear center (BNC) formed by heme A3 and copper B (CU(B)). The BNC reduces molecular oxygen to 2 water molecules using 4 electrons from cytochrome c in the IMS and 4 protons from the mitochondrial matrix.</text>
</comment>
<comment type="catalytic activity">
    <reaction evidence="3">
        <text>4 Fe(II)-[cytochrome c] + O2 + 8 H(+)(in) = 4 Fe(III)-[cytochrome c] + 2 H2O + 4 H(+)(out)</text>
        <dbReference type="Rhea" id="RHEA:11436"/>
        <dbReference type="Rhea" id="RHEA-COMP:10350"/>
        <dbReference type="Rhea" id="RHEA-COMP:14399"/>
        <dbReference type="ChEBI" id="CHEBI:15377"/>
        <dbReference type="ChEBI" id="CHEBI:15378"/>
        <dbReference type="ChEBI" id="CHEBI:15379"/>
        <dbReference type="ChEBI" id="CHEBI:29033"/>
        <dbReference type="ChEBI" id="CHEBI:29034"/>
        <dbReference type="EC" id="7.1.1.9"/>
    </reaction>
    <physiologicalReaction direction="left-to-right" evidence="3">
        <dbReference type="Rhea" id="RHEA:11437"/>
    </physiologicalReaction>
</comment>
<comment type="cofactor">
    <cofactor evidence="4">
        <name>Cu cation</name>
        <dbReference type="ChEBI" id="CHEBI:23378"/>
    </cofactor>
    <text evidence="4">Binds a dinuclear copper A center per subunit.</text>
</comment>
<comment type="subunit">
    <text evidence="1 4">Component of the cytochrome c oxidase (complex IV, CIV), a multisubunit enzyme composed of 14 subunits. The complex is composed of a catalytic core of 3 subunits MT-CO1, MT-CO2 and MT-CO3, encoded in the mitochondrial DNA, and 11 supernumerary subunits COX4I, COX5A, COX5B, COX6A, COX6B, COX6C, COX7A, COX7B, COX7C, COX8 and NDUFA4, which are encoded in the nuclear genome. The complex exists as a monomer or a dimer and forms supercomplexes (SCs) in the inner mitochondrial membrane with NADH-ubiquinone oxidoreductase (complex I, CI) and ubiquinol-cytochrome c oxidoreductase (cytochrome b-c1 complex, complex III, CIII), resulting in different assemblies (supercomplex SCI(1)III(2)IV(1) and megacomplex MCI(2)III(2)IV(2)) (By similarity). Found in a complex with TMEM177, COA6, COX18, COX20, SCO1 and SCO2. Interacts with TMEM177 in a COX20-dependent manner. Interacts with COX20. Interacts with COX16 (By similarity).</text>
</comment>
<comment type="subcellular location">
    <subcellularLocation>
        <location evidence="4">Mitochondrion inner membrane</location>
        <topology evidence="4">Multi-pass membrane protein</topology>
    </subcellularLocation>
</comment>
<comment type="similarity">
    <text evidence="5">Belongs to the cytochrome c oxidase subunit 2 family.</text>
</comment>
<dbReference type="EC" id="7.1.1.9"/>
<dbReference type="EMBL" id="Z29573">
    <property type="protein sequence ID" value="CAA82680.1"/>
    <property type="molecule type" value="Genomic_DNA"/>
</dbReference>
<dbReference type="PIR" id="S47873">
    <property type="entry name" value="S47873"/>
</dbReference>
<dbReference type="SMR" id="P41311"/>
<dbReference type="CTD" id="4513"/>
<dbReference type="GO" id="GO:0005743">
    <property type="term" value="C:mitochondrial inner membrane"/>
    <property type="evidence" value="ECO:0007669"/>
    <property type="project" value="UniProtKB-SubCell"/>
</dbReference>
<dbReference type="GO" id="GO:0045277">
    <property type="term" value="C:respiratory chain complex IV"/>
    <property type="evidence" value="ECO:0000250"/>
    <property type="project" value="UniProtKB"/>
</dbReference>
<dbReference type="GO" id="GO:0005507">
    <property type="term" value="F:copper ion binding"/>
    <property type="evidence" value="ECO:0007669"/>
    <property type="project" value="InterPro"/>
</dbReference>
<dbReference type="GO" id="GO:0004129">
    <property type="term" value="F:cytochrome-c oxidase activity"/>
    <property type="evidence" value="ECO:0007669"/>
    <property type="project" value="UniProtKB-EC"/>
</dbReference>
<dbReference type="GO" id="GO:0042773">
    <property type="term" value="P:ATP synthesis coupled electron transport"/>
    <property type="evidence" value="ECO:0007669"/>
    <property type="project" value="TreeGrafter"/>
</dbReference>
<dbReference type="CDD" id="cd13912">
    <property type="entry name" value="CcO_II_C"/>
    <property type="match status" value="1"/>
</dbReference>
<dbReference type="FunFam" id="1.10.287.90:FF:000001">
    <property type="entry name" value="Cytochrome c oxidase subunit 2"/>
    <property type="match status" value="1"/>
</dbReference>
<dbReference type="FunFam" id="2.60.40.420:FF:000001">
    <property type="entry name" value="Cytochrome c oxidase subunit 2"/>
    <property type="match status" value="1"/>
</dbReference>
<dbReference type="Gene3D" id="1.10.287.90">
    <property type="match status" value="1"/>
</dbReference>
<dbReference type="Gene3D" id="2.60.40.420">
    <property type="entry name" value="Cupredoxins - blue copper proteins"/>
    <property type="match status" value="1"/>
</dbReference>
<dbReference type="InterPro" id="IPR045187">
    <property type="entry name" value="CcO_II"/>
</dbReference>
<dbReference type="InterPro" id="IPR002429">
    <property type="entry name" value="CcO_II-like_C"/>
</dbReference>
<dbReference type="InterPro" id="IPR034210">
    <property type="entry name" value="CcO_II_C"/>
</dbReference>
<dbReference type="InterPro" id="IPR001505">
    <property type="entry name" value="Copper_CuA"/>
</dbReference>
<dbReference type="InterPro" id="IPR008972">
    <property type="entry name" value="Cupredoxin"/>
</dbReference>
<dbReference type="InterPro" id="IPR014222">
    <property type="entry name" value="Cyt_c_oxidase_su2"/>
</dbReference>
<dbReference type="InterPro" id="IPR011759">
    <property type="entry name" value="Cyt_c_oxidase_su2_TM_dom"/>
</dbReference>
<dbReference type="InterPro" id="IPR036257">
    <property type="entry name" value="Cyt_c_oxidase_su2_TM_sf"/>
</dbReference>
<dbReference type="NCBIfam" id="TIGR02866">
    <property type="entry name" value="CoxB"/>
    <property type="match status" value="1"/>
</dbReference>
<dbReference type="PANTHER" id="PTHR22888:SF9">
    <property type="entry name" value="CYTOCHROME C OXIDASE SUBUNIT 2"/>
    <property type="match status" value="1"/>
</dbReference>
<dbReference type="PANTHER" id="PTHR22888">
    <property type="entry name" value="CYTOCHROME C OXIDASE, SUBUNIT II"/>
    <property type="match status" value="1"/>
</dbReference>
<dbReference type="Pfam" id="PF00116">
    <property type="entry name" value="COX2"/>
    <property type="match status" value="1"/>
</dbReference>
<dbReference type="Pfam" id="PF02790">
    <property type="entry name" value="COX2_TM"/>
    <property type="match status" value="1"/>
</dbReference>
<dbReference type="PRINTS" id="PR01166">
    <property type="entry name" value="CYCOXIDASEII"/>
</dbReference>
<dbReference type="SUPFAM" id="SSF49503">
    <property type="entry name" value="Cupredoxins"/>
    <property type="match status" value="1"/>
</dbReference>
<dbReference type="SUPFAM" id="SSF81464">
    <property type="entry name" value="Cytochrome c oxidase subunit II-like, transmembrane region"/>
    <property type="match status" value="1"/>
</dbReference>
<dbReference type="PROSITE" id="PS00078">
    <property type="entry name" value="COX2"/>
    <property type="match status" value="1"/>
</dbReference>
<dbReference type="PROSITE" id="PS50857">
    <property type="entry name" value="COX2_CUA"/>
    <property type="match status" value="1"/>
</dbReference>
<dbReference type="PROSITE" id="PS50999">
    <property type="entry name" value="COX2_TM"/>
    <property type="match status" value="1"/>
</dbReference>
<geneLocation type="mitochondrion"/>
<feature type="chain" id="PRO_0000183570" description="Cytochrome c oxidase subunit 2">
    <location>
        <begin position="1"/>
        <end position="235"/>
    </location>
</feature>
<feature type="topological domain" description="Mitochondrial intermembrane" evidence="4">
    <location>
        <begin position="1"/>
        <end position="14"/>
    </location>
</feature>
<feature type="transmembrane region" description="Helical; Name=I" evidence="4">
    <location>
        <begin position="15"/>
        <end position="45"/>
    </location>
</feature>
<feature type="topological domain" description="Mitochondrial matrix" evidence="4">
    <location>
        <begin position="46"/>
        <end position="59"/>
    </location>
</feature>
<feature type="transmembrane region" description="Helical; Name=II" evidence="4">
    <location>
        <begin position="60"/>
        <end position="87"/>
    </location>
</feature>
<feature type="topological domain" description="Mitochondrial intermembrane" evidence="4">
    <location>
        <begin position="88"/>
        <end position="235"/>
    </location>
</feature>
<feature type="binding site" evidence="4">
    <location>
        <position position="161"/>
    </location>
    <ligand>
        <name>Cu cation</name>
        <dbReference type="ChEBI" id="CHEBI:23378"/>
        <label>A1</label>
    </ligand>
</feature>
<feature type="binding site" evidence="4">
    <location>
        <position position="196"/>
    </location>
    <ligand>
        <name>Cu cation</name>
        <dbReference type="ChEBI" id="CHEBI:23378"/>
        <label>A1</label>
    </ligand>
</feature>
<feature type="binding site" evidence="4">
    <location>
        <position position="196"/>
    </location>
    <ligand>
        <name>Cu cation</name>
        <dbReference type="ChEBI" id="CHEBI:23378"/>
        <label>A2</label>
    </ligand>
</feature>
<feature type="binding site" evidence="4">
    <location>
        <position position="198"/>
    </location>
    <ligand>
        <name>Cu cation</name>
        <dbReference type="ChEBI" id="CHEBI:23378"/>
        <label>A2</label>
    </ligand>
</feature>
<feature type="binding site" evidence="4">
    <location>
        <position position="198"/>
    </location>
    <ligand>
        <name>Mg(2+)</name>
        <dbReference type="ChEBI" id="CHEBI:18420"/>
        <note>ligand shared with MT-CO1</note>
    </ligand>
</feature>
<feature type="binding site" evidence="4">
    <location>
        <position position="200"/>
    </location>
    <ligand>
        <name>Cu cation</name>
        <dbReference type="ChEBI" id="CHEBI:23378"/>
        <label>A1</label>
    </ligand>
</feature>
<feature type="binding site" evidence="4">
    <location>
        <position position="200"/>
    </location>
    <ligand>
        <name>Cu cation</name>
        <dbReference type="ChEBI" id="CHEBI:23378"/>
        <label>A2</label>
    </ligand>
</feature>
<feature type="binding site" evidence="4">
    <location>
        <position position="204"/>
    </location>
    <ligand>
        <name>Cu cation</name>
        <dbReference type="ChEBI" id="CHEBI:23378"/>
        <label>A2</label>
    </ligand>
</feature>
<feature type="binding site" evidence="4">
    <location>
        <position position="207"/>
    </location>
    <ligand>
        <name>Cu cation</name>
        <dbReference type="ChEBI" id="CHEBI:23378"/>
        <label>A1</label>
    </ligand>
</feature>
<feature type="modified residue" description="Phosphotyrosine" evidence="2">
    <location>
        <position position="218"/>
    </location>
</feature>
<evidence type="ECO:0000250" key="1">
    <source>
        <dbReference type="UniProtKB" id="P00403"/>
    </source>
</evidence>
<evidence type="ECO:0000250" key="2">
    <source>
        <dbReference type="UniProtKB" id="P00406"/>
    </source>
</evidence>
<evidence type="ECO:0000250" key="3">
    <source>
        <dbReference type="UniProtKB" id="P00410"/>
    </source>
</evidence>
<evidence type="ECO:0000250" key="4">
    <source>
        <dbReference type="UniProtKB" id="P68530"/>
    </source>
</evidence>
<evidence type="ECO:0000305" key="5"/>
<proteinExistence type="inferred from homology"/>
<protein>
    <recommendedName>
        <fullName>Cytochrome c oxidase subunit 2</fullName>
        <ecNumber>7.1.1.9</ecNumber>
    </recommendedName>
    <alternativeName>
        <fullName>Cytochrome c oxidase polypeptide II</fullName>
    </alternativeName>
</protein>
<reference key="1">
    <citation type="journal article" date="1994" name="Genetics">
        <title>The marsupial mitochondrial genome and the evolution of placental mammals.</title>
        <authorList>
            <person name="Janke A."/>
            <person name="Feldmaier-Fuchs G."/>
            <person name="Thomas K."/>
            <person name="von Haeseler A."/>
            <person name="Paabo S."/>
        </authorList>
    </citation>
    <scope>NUCLEOTIDE SEQUENCE [GENOMIC DNA]</scope>
    <source>
        <tissue>Liver</tissue>
    </source>
</reference>
<sequence length="235" mass="27227">MPYPMQLGFQDATSPIMEELMYFHDHTLMIVFLISSLVLYIIILMLTTKLTHTSTMDAQEVETIWTILPAVILILIALPSLRILYMMDEIYNPYLTVKAMGHQWYWSYEFTDYENLMFDSYMIPTKDLSPGQLRLLEVDNRIVLPMELPIRMLISSEDVLHAWTMPSLGLKADAIPGRLNQITLTSSRPGVFYGQCSEICGSNHSFMPIVLEMASLKYFEKWSSMMQSFLSYLYI</sequence>
<accession>P41311</accession>
<name>COX2_DIDVI</name>
<gene>
    <name type="primary">MT-CO2</name>
    <name type="synonym">COII</name>
    <name type="synonym">COXII</name>
    <name type="synonym">MTCO2</name>
</gene>
<organism>
    <name type="scientific">Didelphis virginiana</name>
    <name type="common">North American opossum</name>
    <name type="synonym">Didelphis marsupialis virginiana</name>
    <dbReference type="NCBI Taxonomy" id="9267"/>
    <lineage>
        <taxon>Eukaryota</taxon>
        <taxon>Metazoa</taxon>
        <taxon>Chordata</taxon>
        <taxon>Craniata</taxon>
        <taxon>Vertebrata</taxon>
        <taxon>Euteleostomi</taxon>
        <taxon>Mammalia</taxon>
        <taxon>Metatheria</taxon>
        <taxon>Didelphimorphia</taxon>
        <taxon>Didelphidae</taxon>
        <taxon>Didelphis</taxon>
    </lineage>
</organism>